<comment type="function">
    <text evidence="1">Catalyzes the conversion of glucosamine-6-phosphate to glucosamine-1-phosphate.</text>
</comment>
<comment type="catalytic activity">
    <reaction evidence="1">
        <text>alpha-D-glucosamine 1-phosphate = D-glucosamine 6-phosphate</text>
        <dbReference type="Rhea" id="RHEA:23424"/>
        <dbReference type="ChEBI" id="CHEBI:58516"/>
        <dbReference type="ChEBI" id="CHEBI:58725"/>
        <dbReference type="EC" id="5.4.2.10"/>
    </reaction>
</comment>
<comment type="cofactor">
    <cofactor evidence="1">
        <name>Mg(2+)</name>
        <dbReference type="ChEBI" id="CHEBI:18420"/>
    </cofactor>
    <text evidence="1">Binds 1 Mg(2+) ion per subunit.</text>
</comment>
<comment type="PTM">
    <text evidence="1">Activated by phosphorylation.</text>
</comment>
<comment type="similarity">
    <text evidence="1">Belongs to the phosphohexose mutase family.</text>
</comment>
<protein>
    <recommendedName>
        <fullName evidence="1">Phosphoglucosamine mutase</fullName>
        <ecNumber evidence="1">5.4.2.10</ecNumber>
    </recommendedName>
</protein>
<evidence type="ECO:0000255" key="1">
    <source>
        <dbReference type="HAMAP-Rule" id="MF_01554"/>
    </source>
</evidence>
<accession>Q9CNJ0</accession>
<gene>
    <name evidence="1" type="primary">glmM</name>
    <name type="ordered locus">PM0440</name>
</gene>
<proteinExistence type="inferred from homology"/>
<sequence>MAERKYFGTDGVRGKVGTFPITPDFALKLGWAAGKVLATQGSRTVLIGKDTRISGYMLESALEAGLAAAGLSAAFTGPMPTPAIAYLTRTFRAEAGIVISASHNPYYDNGIKFFSAQGTKLPDDVEEAIEAMLDEPMDCVESAELGRASRINDAVGRYIEFCKGTFPAHLSLENYKIVVDCAHGATYHIAPNVMRELGAEVIEIGAKPNGLNINEKCGATDIKALQEKVLEVKADVGLAYDGDGDRLIMVDHLGNKVDGDQVLFIIAREALRAGHLKGGVVGTLMSNMSLELALKQLGIPFVRANVGDRYVLEKMQEKGWLLGGENSGHIIILDKNTTGDGIIASLAVLSAMVQHNLSLNELASAVPLFPQVLINVRFAGGDNPLESAAVKAVAAEVEKRLAGKGRILLRKSGTEPLIRVMVECEDGALAQQCAEQIADVVRAN</sequence>
<feature type="chain" id="PRO_0000147929" description="Phosphoglucosamine mutase">
    <location>
        <begin position="1"/>
        <end position="444"/>
    </location>
</feature>
<feature type="active site" description="Phosphoserine intermediate" evidence="1">
    <location>
        <position position="102"/>
    </location>
</feature>
<feature type="binding site" description="via phosphate group" evidence="1">
    <location>
        <position position="102"/>
    </location>
    <ligand>
        <name>Mg(2+)</name>
        <dbReference type="ChEBI" id="CHEBI:18420"/>
    </ligand>
</feature>
<feature type="binding site" evidence="1">
    <location>
        <position position="241"/>
    </location>
    <ligand>
        <name>Mg(2+)</name>
        <dbReference type="ChEBI" id="CHEBI:18420"/>
    </ligand>
</feature>
<feature type="binding site" evidence="1">
    <location>
        <position position="243"/>
    </location>
    <ligand>
        <name>Mg(2+)</name>
        <dbReference type="ChEBI" id="CHEBI:18420"/>
    </ligand>
</feature>
<feature type="binding site" evidence="1">
    <location>
        <position position="245"/>
    </location>
    <ligand>
        <name>Mg(2+)</name>
        <dbReference type="ChEBI" id="CHEBI:18420"/>
    </ligand>
</feature>
<feature type="modified residue" description="Phosphoserine" evidence="1">
    <location>
        <position position="102"/>
    </location>
</feature>
<organism>
    <name type="scientific">Pasteurella multocida (strain Pm70)</name>
    <dbReference type="NCBI Taxonomy" id="272843"/>
    <lineage>
        <taxon>Bacteria</taxon>
        <taxon>Pseudomonadati</taxon>
        <taxon>Pseudomonadota</taxon>
        <taxon>Gammaproteobacteria</taxon>
        <taxon>Pasteurellales</taxon>
        <taxon>Pasteurellaceae</taxon>
        <taxon>Pasteurella</taxon>
    </lineage>
</organism>
<keyword id="KW-0413">Isomerase</keyword>
<keyword id="KW-0460">Magnesium</keyword>
<keyword id="KW-0479">Metal-binding</keyword>
<keyword id="KW-0597">Phosphoprotein</keyword>
<keyword id="KW-1185">Reference proteome</keyword>
<name>GLMM_PASMU</name>
<dbReference type="EC" id="5.4.2.10" evidence="1"/>
<dbReference type="EMBL" id="AE004439">
    <property type="protein sequence ID" value="AAK02524.1"/>
    <property type="molecule type" value="Genomic_DNA"/>
</dbReference>
<dbReference type="RefSeq" id="WP_005726160.1">
    <property type="nucleotide sequence ID" value="NC_002663.1"/>
</dbReference>
<dbReference type="SMR" id="Q9CNJ0"/>
<dbReference type="STRING" id="272843.PM0440"/>
<dbReference type="EnsemblBacteria" id="AAK02524">
    <property type="protein sequence ID" value="AAK02524"/>
    <property type="gene ID" value="PM0440"/>
</dbReference>
<dbReference type="GeneID" id="77206076"/>
<dbReference type="KEGG" id="pmu:PM0440"/>
<dbReference type="PATRIC" id="fig|272843.6.peg.452"/>
<dbReference type="HOGENOM" id="CLU_016950_7_0_6"/>
<dbReference type="OrthoDB" id="9803322at2"/>
<dbReference type="Proteomes" id="UP000000809">
    <property type="component" value="Chromosome"/>
</dbReference>
<dbReference type="GO" id="GO:0005829">
    <property type="term" value="C:cytosol"/>
    <property type="evidence" value="ECO:0007669"/>
    <property type="project" value="TreeGrafter"/>
</dbReference>
<dbReference type="GO" id="GO:0000287">
    <property type="term" value="F:magnesium ion binding"/>
    <property type="evidence" value="ECO:0007669"/>
    <property type="project" value="UniProtKB-UniRule"/>
</dbReference>
<dbReference type="GO" id="GO:0008966">
    <property type="term" value="F:phosphoglucosamine mutase activity"/>
    <property type="evidence" value="ECO:0007669"/>
    <property type="project" value="UniProtKB-UniRule"/>
</dbReference>
<dbReference type="GO" id="GO:0004615">
    <property type="term" value="F:phosphomannomutase activity"/>
    <property type="evidence" value="ECO:0007669"/>
    <property type="project" value="TreeGrafter"/>
</dbReference>
<dbReference type="GO" id="GO:0005975">
    <property type="term" value="P:carbohydrate metabolic process"/>
    <property type="evidence" value="ECO:0007669"/>
    <property type="project" value="InterPro"/>
</dbReference>
<dbReference type="GO" id="GO:0009252">
    <property type="term" value="P:peptidoglycan biosynthetic process"/>
    <property type="evidence" value="ECO:0007669"/>
    <property type="project" value="TreeGrafter"/>
</dbReference>
<dbReference type="GO" id="GO:0006048">
    <property type="term" value="P:UDP-N-acetylglucosamine biosynthetic process"/>
    <property type="evidence" value="ECO:0007669"/>
    <property type="project" value="TreeGrafter"/>
</dbReference>
<dbReference type="CDD" id="cd05802">
    <property type="entry name" value="GlmM"/>
    <property type="match status" value="1"/>
</dbReference>
<dbReference type="FunFam" id="3.30.310.50:FF:000001">
    <property type="entry name" value="Phosphoglucosamine mutase"/>
    <property type="match status" value="1"/>
</dbReference>
<dbReference type="FunFam" id="3.40.120.10:FF:000001">
    <property type="entry name" value="Phosphoglucosamine mutase"/>
    <property type="match status" value="1"/>
</dbReference>
<dbReference type="FunFam" id="3.40.120.10:FF:000002">
    <property type="entry name" value="Phosphoglucosamine mutase"/>
    <property type="match status" value="1"/>
</dbReference>
<dbReference type="Gene3D" id="3.40.120.10">
    <property type="entry name" value="Alpha-D-Glucose-1,6-Bisphosphate, subunit A, domain 3"/>
    <property type="match status" value="3"/>
</dbReference>
<dbReference type="Gene3D" id="3.30.310.50">
    <property type="entry name" value="Alpha-D-phosphohexomutase, C-terminal domain"/>
    <property type="match status" value="1"/>
</dbReference>
<dbReference type="HAMAP" id="MF_01554_B">
    <property type="entry name" value="GlmM_B"/>
    <property type="match status" value="1"/>
</dbReference>
<dbReference type="InterPro" id="IPR005844">
    <property type="entry name" value="A-D-PHexomutase_a/b/a-I"/>
</dbReference>
<dbReference type="InterPro" id="IPR016055">
    <property type="entry name" value="A-D-PHexomutase_a/b/a-I/II/III"/>
</dbReference>
<dbReference type="InterPro" id="IPR005845">
    <property type="entry name" value="A-D-PHexomutase_a/b/a-II"/>
</dbReference>
<dbReference type="InterPro" id="IPR005846">
    <property type="entry name" value="A-D-PHexomutase_a/b/a-III"/>
</dbReference>
<dbReference type="InterPro" id="IPR005843">
    <property type="entry name" value="A-D-PHexomutase_C"/>
</dbReference>
<dbReference type="InterPro" id="IPR036900">
    <property type="entry name" value="A-D-PHexomutase_C_sf"/>
</dbReference>
<dbReference type="InterPro" id="IPR016066">
    <property type="entry name" value="A-D-PHexomutase_CS"/>
</dbReference>
<dbReference type="InterPro" id="IPR005841">
    <property type="entry name" value="Alpha-D-phosphohexomutase_SF"/>
</dbReference>
<dbReference type="InterPro" id="IPR006352">
    <property type="entry name" value="GlmM_bact"/>
</dbReference>
<dbReference type="InterPro" id="IPR050060">
    <property type="entry name" value="Phosphoglucosamine_mutase"/>
</dbReference>
<dbReference type="NCBIfam" id="TIGR01455">
    <property type="entry name" value="glmM"/>
    <property type="match status" value="1"/>
</dbReference>
<dbReference type="NCBIfam" id="NF008139">
    <property type="entry name" value="PRK10887.1"/>
    <property type="match status" value="1"/>
</dbReference>
<dbReference type="PANTHER" id="PTHR42946:SF1">
    <property type="entry name" value="PHOSPHOGLUCOMUTASE (ALPHA-D-GLUCOSE-1,6-BISPHOSPHATE-DEPENDENT)"/>
    <property type="match status" value="1"/>
</dbReference>
<dbReference type="PANTHER" id="PTHR42946">
    <property type="entry name" value="PHOSPHOHEXOSE MUTASE"/>
    <property type="match status" value="1"/>
</dbReference>
<dbReference type="Pfam" id="PF02878">
    <property type="entry name" value="PGM_PMM_I"/>
    <property type="match status" value="1"/>
</dbReference>
<dbReference type="Pfam" id="PF02879">
    <property type="entry name" value="PGM_PMM_II"/>
    <property type="match status" value="1"/>
</dbReference>
<dbReference type="Pfam" id="PF02880">
    <property type="entry name" value="PGM_PMM_III"/>
    <property type="match status" value="1"/>
</dbReference>
<dbReference type="Pfam" id="PF00408">
    <property type="entry name" value="PGM_PMM_IV"/>
    <property type="match status" value="1"/>
</dbReference>
<dbReference type="PRINTS" id="PR00509">
    <property type="entry name" value="PGMPMM"/>
</dbReference>
<dbReference type="SUPFAM" id="SSF55957">
    <property type="entry name" value="Phosphoglucomutase, C-terminal domain"/>
    <property type="match status" value="1"/>
</dbReference>
<dbReference type="SUPFAM" id="SSF53738">
    <property type="entry name" value="Phosphoglucomutase, first 3 domains"/>
    <property type="match status" value="3"/>
</dbReference>
<dbReference type="PROSITE" id="PS00710">
    <property type="entry name" value="PGM_PMM"/>
    <property type="match status" value="1"/>
</dbReference>
<reference key="1">
    <citation type="journal article" date="2001" name="Proc. Natl. Acad. Sci. U.S.A.">
        <title>Complete genomic sequence of Pasteurella multocida Pm70.</title>
        <authorList>
            <person name="May B.J."/>
            <person name="Zhang Q."/>
            <person name="Li L.L."/>
            <person name="Paustian M.L."/>
            <person name="Whittam T.S."/>
            <person name="Kapur V."/>
        </authorList>
    </citation>
    <scope>NUCLEOTIDE SEQUENCE [LARGE SCALE GENOMIC DNA]</scope>
    <source>
        <strain>Pm70</strain>
    </source>
</reference>